<accession>Q8CPB5</accession>
<sequence>MRNILFVGLGLIGGSLASNLKYHYSNFNILAYDSDYTQLDEALSIGIIDQKVNDYATAVEIADIIIFATPVEQTIKYLSELTNYNTKTHLIVTDTGSTKLTIQSFEKELLKHDIHLISGHPMAGSHKSGVLNAKKHLFENAYYILVFNEIENNEAATYLKKLLKPTLAKFIVTHANEHDFVTGIVSHVPHIIASILVHLSANHVKDHSLIEKLAAGGFRDITRIASSNAQMWKDITLNNQNHILSLLNEIKEQITGIENLIREQNSNSIYDFFVKAKDYRDQLPVKQHGAISTAYDLYVDIPDKPGMISQITNIISSHNISIINLKILEVREDIYGALQISFKSPEDRENAIKALANFDTYY</sequence>
<name>TYRA_STAES</name>
<protein>
    <recommendedName>
        <fullName>Prephenate dehydrogenase</fullName>
        <shortName>PDH</shortName>
        <ecNumber>1.3.1.12</ecNumber>
    </recommendedName>
</protein>
<organism>
    <name type="scientific">Staphylococcus epidermidis (strain ATCC 12228 / FDA PCI 1200)</name>
    <dbReference type="NCBI Taxonomy" id="176280"/>
    <lineage>
        <taxon>Bacteria</taxon>
        <taxon>Bacillati</taxon>
        <taxon>Bacillota</taxon>
        <taxon>Bacilli</taxon>
        <taxon>Bacillales</taxon>
        <taxon>Staphylococcaceae</taxon>
        <taxon>Staphylococcus</taxon>
    </lineage>
</organism>
<proteinExistence type="inferred from homology"/>
<keyword id="KW-0028">Amino-acid biosynthesis</keyword>
<keyword id="KW-0057">Aromatic amino acid biosynthesis</keyword>
<keyword id="KW-0520">NAD</keyword>
<keyword id="KW-0560">Oxidoreductase</keyword>
<keyword id="KW-0827">Tyrosine biosynthesis</keyword>
<dbReference type="EC" id="1.3.1.12"/>
<dbReference type="EMBL" id="AE015929">
    <property type="protein sequence ID" value="AAO04644.1"/>
    <property type="molecule type" value="Genomic_DNA"/>
</dbReference>
<dbReference type="RefSeq" id="NP_764602.1">
    <property type="nucleotide sequence ID" value="NC_004461.1"/>
</dbReference>
<dbReference type="RefSeq" id="WP_001831297.1">
    <property type="nucleotide sequence ID" value="NZ_WBME01000002.1"/>
</dbReference>
<dbReference type="SMR" id="Q8CPB5"/>
<dbReference type="KEGG" id="sep:SE_1047"/>
<dbReference type="PATRIC" id="fig|176280.10.peg.1023"/>
<dbReference type="eggNOG" id="COG0287">
    <property type="taxonomic scope" value="Bacteria"/>
</dbReference>
<dbReference type="HOGENOM" id="CLU_055968_2_1_9"/>
<dbReference type="OrthoDB" id="9802008at2"/>
<dbReference type="UniPathway" id="UPA00122">
    <property type="reaction ID" value="UER00961"/>
</dbReference>
<dbReference type="Proteomes" id="UP000001411">
    <property type="component" value="Chromosome"/>
</dbReference>
<dbReference type="GO" id="GO:0070403">
    <property type="term" value="F:NAD+ binding"/>
    <property type="evidence" value="ECO:0007669"/>
    <property type="project" value="InterPro"/>
</dbReference>
<dbReference type="GO" id="GO:0008977">
    <property type="term" value="F:prephenate dehydrogenase (NAD+) activity"/>
    <property type="evidence" value="ECO:0007669"/>
    <property type="project" value="UniProtKB-EC"/>
</dbReference>
<dbReference type="GO" id="GO:0004665">
    <property type="term" value="F:prephenate dehydrogenase (NADP+) activity"/>
    <property type="evidence" value="ECO:0007669"/>
    <property type="project" value="InterPro"/>
</dbReference>
<dbReference type="GO" id="GO:0006571">
    <property type="term" value="P:tyrosine biosynthetic process"/>
    <property type="evidence" value="ECO:0007669"/>
    <property type="project" value="UniProtKB-UniPathway"/>
</dbReference>
<dbReference type="FunFam" id="1.10.3660.10:FF:000003">
    <property type="entry name" value="Prephenate dehydrogenase"/>
    <property type="match status" value="1"/>
</dbReference>
<dbReference type="FunFam" id="3.40.50.720:FF:000208">
    <property type="entry name" value="Prephenate dehydrogenase"/>
    <property type="match status" value="1"/>
</dbReference>
<dbReference type="Gene3D" id="3.30.70.260">
    <property type="match status" value="1"/>
</dbReference>
<dbReference type="Gene3D" id="1.10.3660.10">
    <property type="entry name" value="6-phosphogluconate dehydrogenase C-terminal like domain"/>
    <property type="match status" value="1"/>
</dbReference>
<dbReference type="Gene3D" id="3.40.50.720">
    <property type="entry name" value="NAD(P)-binding Rossmann-like Domain"/>
    <property type="match status" value="1"/>
</dbReference>
<dbReference type="InterPro" id="IPR008927">
    <property type="entry name" value="6-PGluconate_DH-like_C_sf"/>
</dbReference>
<dbReference type="InterPro" id="IPR045865">
    <property type="entry name" value="ACT-like_dom_sf"/>
</dbReference>
<dbReference type="InterPro" id="IPR002912">
    <property type="entry name" value="ACT_dom"/>
</dbReference>
<dbReference type="InterPro" id="IPR036291">
    <property type="entry name" value="NAD(P)-bd_dom_sf"/>
</dbReference>
<dbReference type="InterPro" id="IPR046825">
    <property type="entry name" value="PDH_C"/>
</dbReference>
<dbReference type="InterPro" id="IPR046826">
    <property type="entry name" value="PDH_N"/>
</dbReference>
<dbReference type="InterPro" id="IPR050812">
    <property type="entry name" value="Preph/Arog_dehydrog"/>
</dbReference>
<dbReference type="InterPro" id="IPR003099">
    <property type="entry name" value="Prephen_DH"/>
</dbReference>
<dbReference type="NCBIfam" id="NF005106">
    <property type="entry name" value="PRK06545.1-4"/>
    <property type="match status" value="1"/>
</dbReference>
<dbReference type="NCBIfam" id="NF005107">
    <property type="entry name" value="PRK06545.1-5"/>
    <property type="match status" value="1"/>
</dbReference>
<dbReference type="PANTHER" id="PTHR21363">
    <property type="entry name" value="PREPHENATE DEHYDROGENASE"/>
    <property type="match status" value="1"/>
</dbReference>
<dbReference type="PANTHER" id="PTHR21363:SF0">
    <property type="entry name" value="PREPHENATE DEHYDROGENASE [NADP(+)]"/>
    <property type="match status" value="1"/>
</dbReference>
<dbReference type="Pfam" id="PF01842">
    <property type="entry name" value="ACT"/>
    <property type="match status" value="1"/>
</dbReference>
<dbReference type="Pfam" id="PF20463">
    <property type="entry name" value="PDH_C"/>
    <property type="match status" value="1"/>
</dbReference>
<dbReference type="Pfam" id="PF02153">
    <property type="entry name" value="PDH_N"/>
    <property type="match status" value="1"/>
</dbReference>
<dbReference type="SUPFAM" id="SSF48179">
    <property type="entry name" value="6-phosphogluconate dehydrogenase C-terminal domain-like"/>
    <property type="match status" value="1"/>
</dbReference>
<dbReference type="SUPFAM" id="SSF55021">
    <property type="entry name" value="ACT-like"/>
    <property type="match status" value="1"/>
</dbReference>
<dbReference type="SUPFAM" id="SSF51735">
    <property type="entry name" value="NAD(P)-binding Rossmann-fold domains"/>
    <property type="match status" value="1"/>
</dbReference>
<dbReference type="PROSITE" id="PS51671">
    <property type="entry name" value="ACT"/>
    <property type="match status" value="1"/>
</dbReference>
<dbReference type="PROSITE" id="PS51176">
    <property type="entry name" value="PDH_ADH"/>
    <property type="match status" value="1"/>
</dbReference>
<reference key="1">
    <citation type="journal article" date="2003" name="Mol. Microbiol.">
        <title>Genome-based analysis of virulence genes in a non-biofilm-forming Staphylococcus epidermidis strain (ATCC 12228).</title>
        <authorList>
            <person name="Zhang Y.-Q."/>
            <person name="Ren S.-X."/>
            <person name="Li H.-L."/>
            <person name="Wang Y.-X."/>
            <person name="Fu G."/>
            <person name="Yang J."/>
            <person name="Qin Z.-Q."/>
            <person name="Miao Y.-G."/>
            <person name="Wang W.-Y."/>
            <person name="Chen R.-S."/>
            <person name="Shen Y."/>
            <person name="Chen Z."/>
            <person name="Yuan Z.-H."/>
            <person name="Zhao G.-P."/>
            <person name="Qu D."/>
            <person name="Danchin A."/>
            <person name="Wen Y.-M."/>
        </authorList>
    </citation>
    <scope>NUCLEOTIDE SEQUENCE [LARGE SCALE GENOMIC DNA]</scope>
    <source>
        <strain>ATCC 12228 / FDA PCI 1200</strain>
    </source>
</reference>
<comment type="catalytic activity">
    <reaction>
        <text>prephenate + NAD(+) = 3-(4-hydroxyphenyl)pyruvate + CO2 + NADH</text>
        <dbReference type="Rhea" id="RHEA:13869"/>
        <dbReference type="ChEBI" id="CHEBI:16526"/>
        <dbReference type="ChEBI" id="CHEBI:29934"/>
        <dbReference type="ChEBI" id="CHEBI:36242"/>
        <dbReference type="ChEBI" id="CHEBI:57540"/>
        <dbReference type="ChEBI" id="CHEBI:57945"/>
        <dbReference type="EC" id="1.3.1.12"/>
    </reaction>
</comment>
<comment type="pathway">
    <text>Amino-acid biosynthesis; L-tyrosine biosynthesis; (4-hydroxyphenyl)pyruvate from prephenate (NAD(+) route): step 1/1.</text>
</comment>
<comment type="similarity">
    <text evidence="4">Belongs to the prephenate/arogenate dehydrogenase family.</text>
</comment>
<gene>
    <name type="primary">tyrA</name>
    <name type="ordered locus">SE_1047</name>
</gene>
<feature type="chain" id="PRO_0000282663" description="Prephenate dehydrogenase">
    <location>
        <begin position="1"/>
        <end position="362"/>
    </location>
</feature>
<feature type="domain" description="Prephenate/arogenate dehydrogenase" evidence="2">
    <location>
        <begin position="2"/>
        <end position="291"/>
    </location>
</feature>
<feature type="domain" description="ACT" evidence="3">
    <location>
        <begin position="296"/>
        <end position="362"/>
    </location>
</feature>
<feature type="binding site" evidence="1">
    <location>
        <begin position="3"/>
        <end position="33"/>
    </location>
    <ligand>
        <name>NAD(+)</name>
        <dbReference type="ChEBI" id="CHEBI:57540"/>
    </ligand>
</feature>
<evidence type="ECO:0000255" key="1"/>
<evidence type="ECO:0000255" key="2">
    <source>
        <dbReference type="PROSITE-ProRule" id="PRU00522"/>
    </source>
</evidence>
<evidence type="ECO:0000255" key="3">
    <source>
        <dbReference type="PROSITE-ProRule" id="PRU01007"/>
    </source>
</evidence>
<evidence type="ECO:0000305" key="4"/>